<accession>Q8EDD7</accession>
<sequence>MITCLIVDDELFAREELADSLSQEADIEIIGQCSNAIEALQTITKEKPQLVFLDIQMPRISGMELIAMLDPDTLPKIVFVTAFDEFAVKAFDNHAFDYLLKPIDADRLSKTLKRVRKDLTPQAVNLIAPRSLEHLPCYSGSKLKVIPIQDVEYVFSDLSGIHVACTKGKVHTQLTLKVLEEKTPLVHCHRQYLISPKAIAEIELLDTGAEVTTLLGDKVPVSRRYLKSLKQLFGFQ</sequence>
<proteinExistence type="inferred from homology"/>
<gene>
    <name type="ordered locus">SO_2823</name>
</gene>
<name>Y2823_SHEON</name>
<keyword id="KW-0238">DNA-binding</keyword>
<keyword id="KW-0597">Phosphoprotein</keyword>
<keyword id="KW-1185">Reference proteome</keyword>
<keyword id="KW-0804">Transcription</keyword>
<keyword id="KW-0805">Transcription regulation</keyword>
<keyword id="KW-0902">Two-component regulatory system</keyword>
<dbReference type="EMBL" id="AE014299">
    <property type="protein sequence ID" value="AAN55840.1"/>
    <property type="molecule type" value="Genomic_DNA"/>
</dbReference>
<dbReference type="RefSeq" id="NP_718396.1">
    <property type="nucleotide sequence ID" value="NC_004347.2"/>
</dbReference>
<dbReference type="RefSeq" id="WP_011072747.1">
    <property type="nucleotide sequence ID" value="NC_004347.2"/>
</dbReference>
<dbReference type="SMR" id="Q8EDD7"/>
<dbReference type="STRING" id="211586.SO_2823"/>
<dbReference type="PaxDb" id="211586-SO_2823"/>
<dbReference type="KEGG" id="son:SO_2823"/>
<dbReference type="PATRIC" id="fig|211586.12.peg.2725"/>
<dbReference type="eggNOG" id="COG3279">
    <property type="taxonomic scope" value="Bacteria"/>
</dbReference>
<dbReference type="HOGENOM" id="CLU_000445_14_1_6"/>
<dbReference type="OrthoDB" id="236568at2"/>
<dbReference type="PhylomeDB" id="Q8EDD7"/>
<dbReference type="BioCyc" id="SONE211586:G1GMP-2606-MONOMER"/>
<dbReference type="Proteomes" id="UP000008186">
    <property type="component" value="Chromosome"/>
</dbReference>
<dbReference type="GO" id="GO:0005829">
    <property type="term" value="C:cytosol"/>
    <property type="evidence" value="ECO:0000318"/>
    <property type="project" value="GO_Central"/>
</dbReference>
<dbReference type="GO" id="GO:0032993">
    <property type="term" value="C:protein-DNA complex"/>
    <property type="evidence" value="ECO:0000318"/>
    <property type="project" value="GO_Central"/>
</dbReference>
<dbReference type="GO" id="GO:0000156">
    <property type="term" value="F:phosphorelay response regulator activity"/>
    <property type="evidence" value="ECO:0000318"/>
    <property type="project" value="GO_Central"/>
</dbReference>
<dbReference type="GO" id="GO:0000976">
    <property type="term" value="F:transcription cis-regulatory region binding"/>
    <property type="evidence" value="ECO:0000318"/>
    <property type="project" value="GO_Central"/>
</dbReference>
<dbReference type="GO" id="GO:0006355">
    <property type="term" value="P:regulation of DNA-templated transcription"/>
    <property type="evidence" value="ECO:0000318"/>
    <property type="project" value="GO_Central"/>
</dbReference>
<dbReference type="CDD" id="cd17532">
    <property type="entry name" value="REC_LytTR_AlgR-like"/>
    <property type="match status" value="1"/>
</dbReference>
<dbReference type="FunFam" id="2.40.50.1020:FF:000001">
    <property type="entry name" value="Two-component response regulator yehT"/>
    <property type="match status" value="1"/>
</dbReference>
<dbReference type="FunFam" id="3.40.50.2300:FF:000051">
    <property type="entry name" value="Two-component response regulator yehT"/>
    <property type="match status" value="1"/>
</dbReference>
<dbReference type="Gene3D" id="3.40.50.2300">
    <property type="match status" value="1"/>
</dbReference>
<dbReference type="Gene3D" id="2.40.50.1020">
    <property type="entry name" value="LytTr DNA-binding domain"/>
    <property type="match status" value="1"/>
</dbReference>
<dbReference type="InterPro" id="IPR011006">
    <property type="entry name" value="CheY-like_superfamily"/>
</dbReference>
<dbReference type="InterPro" id="IPR007492">
    <property type="entry name" value="LytTR_DNA-bd_dom"/>
</dbReference>
<dbReference type="InterPro" id="IPR001789">
    <property type="entry name" value="Sig_transdc_resp-reg_receiver"/>
</dbReference>
<dbReference type="InterPro" id="IPR039420">
    <property type="entry name" value="WalR-like"/>
</dbReference>
<dbReference type="NCBIfam" id="NF008677">
    <property type="entry name" value="PRK11697.1"/>
    <property type="match status" value="1"/>
</dbReference>
<dbReference type="PANTHER" id="PTHR48111">
    <property type="entry name" value="REGULATOR OF RPOS"/>
    <property type="match status" value="1"/>
</dbReference>
<dbReference type="PANTHER" id="PTHR48111:SF3">
    <property type="entry name" value="TRANSCRIPTIONAL REGULATORY PROTEIN BTSR"/>
    <property type="match status" value="1"/>
</dbReference>
<dbReference type="Pfam" id="PF04397">
    <property type="entry name" value="LytTR"/>
    <property type="match status" value="1"/>
</dbReference>
<dbReference type="Pfam" id="PF00072">
    <property type="entry name" value="Response_reg"/>
    <property type="match status" value="1"/>
</dbReference>
<dbReference type="SMART" id="SM00850">
    <property type="entry name" value="LytTR"/>
    <property type="match status" value="1"/>
</dbReference>
<dbReference type="SMART" id="SM00448">
    <property type="entry name" value="REC"/>
    <property type="match status" value="1"/>
</dbReference>
<dbReference type="SUPFAM" id="SSF52172">
    <property type="entry name" value="CheY-like"/>
    <property type="match status" value="1"/>
</dbReference>
<dbReference type="PROSITE" id="PS50930">
    <property type="entry name" value="HTH_LYTTR"/>
    <property type="match status" value="1"/>
</dbReference>
<dbReference type="PROSITE" id="PS50110">
    <property type="entry name" value="RESPONSE_REGULATORY"/>
    <property type="match status" value="1"/>
</dbReference>
<organism>
    <name type="scientific">Shewanella oneidensis (strain ATCC 700550 / JCM 31522 / CIP 106686 / LMG 19005 / NCIMB 14063 / MR-1)</name>
    <dbReference type="NCBI Taxonomy" id="211586"/>
    <lineage>
        <taxon>Bacteria</taxon>
        <taxon>Pseudomonadati</taxon>
        <taxon>Pseudomonadota</taxon>
        <taxon>Gammaproteobacteria</taxon>
        <taxon>Alteromonadales</taxon>
        <taxon>Shewanellaceae</taxon>
        <taxon>Shewanella</taxon>
    </lineage>
</organism>
<evidence type="ECO:0000255" key="1">
    <source>
        <dbReference type="PROSITE-ProRule" id="PRU00112"/>
    </source>
</evidence>
<evidence type="ECO:0000255" key="2">
    <source>
        <dbReference type="PROSITE-ProRule" id="PRU00169"/>
    </source>
</evidence>
<feature type="chain" id="PRO_0000081368" description="Uncharacterized response regulatory protein SO_2823">
    <location>
        <begin position="1"/>
        <end position="236"/>
    </location>
</feature>
<feature type="domain" description="Response regulatory" evidence="2">
    <location>
        <begin position="3"/>
        <end position="116"/>
    </location>
</feature>
<feature type="domain" description="HTH LytTR-type" evidence="1">
    <location>
        <begin position="135"/>
        <end position="235"/>
    </location>
</feature>
<feature type="modified residue" description="4-aspartylphosphate" evidence="2">
    <location>
        <position position="54"/>
    </location>
</feature>
<reference key="1">
    <citation type="journal article" date="2002" name="Nat. Biotechnol.">
        <title>Genome sequence of the dissimilatory metal ion-reducing bacterium Shewanella oneidensis.</title>
        <authorList>
            <person name="Heidelberg J.F."/>
            <person name="Paulsen I.T."/>
            <person name="Nelson K.E."/>
            <person name="Gaidos E.J."/>
            <person name="Nelson W.C."/>
            <person name="Read T.D."/>
            <person name="Eisen J.A."/>
            <person name="Seshadri R."/>
            <person name="Ward N.L."/>
            <person name="Methe B.A."/>
            <person name="Clayton R.A."/>
            <person name="Meyer T."/>
            <person name="Tsapin A."/>
            <person name="Scott J."/>
            <person name="Beanan M.J."/>
            <person name="Brinkac L.M."/>
            <person name="Daugherty S.C."/>
            <person name="DeBoy R.T."/>
            <person name="Dodson R.J."/>
            <person name="Durkin A.S."/>
            <person name="Haft D.H."/>
            <person name="Kolonay J.F."/>
            <person name="Madupu R."/>
            <person name="Peterson J.D."/>
            <person name="Umayam L.A."/>
            <person name="White O."/>
            <person name="Wolf A.M."/>
            <person name="Vamathevan J.J."/>
            <person name="Weidman J.F."/>
            <person name="Impraim M."/>
            <person name="Lee K."/>
            <person name="Berry K.J."/>
            <person name="Lee C."/>
            <person name="Mueller J."/>
            <person name="Khouri H.M."/>
            <person name="Gill J."/>
            <person name="Utterback T.R."/>
            <person name="McDonald L.A."/>
            <person name="Feldblyum T.V."/>
            <person name="Smith H.O."/>
            <person name="Venter J.C."/>
            <person name="Nealson K.H."/>
            <person name="Fraser C.M."/>
        </authorList>
    </citation>
    <scope>NUCLEOTIDE SEQUENCE [LARGE SCALE GENOMIC DNA]</scope>
    <source>
        <strain>ATCC 700550 / JCM 31522 / CIP 106686 / LMG 19005 / NCIMB 14063 / MR-1</strain>
    </source>
</reference>
<protein>
    <recommendedName>
        <fullName>Uncharacterized response regulatory protein SO_2823</fullName>
    </recommendedName>
</protein>